<comment type="function">
    <molecule>CLE19p</molecule>
    <text evidence="5 6 7 8 9 10">Extracellular signal peptide that regulates cell fate. Represses root apical meristem maintenance.</text>
</comment>
<comment type="subcellular location">
    <molecule>CLE19p</molecule>
    <subcellularLocation>
        <location evidence="7">Secreted</location>
        <location evidence="7">Extracellular space</location>
    </subcellularLocation>
</comment>
<comment type="tissue specificity">
    <molecule>CLE19p</molecule>
    <text evidence="4 6">Mostly expressed in heart-shape embryos, pollen and young flower buds, and, to a lower extent, in inflorescence, leaves and roots.</text>
</comment>
<comment type="PTM">
    <molecule>CLE19p</molecule>
    <text evidence="1">The O-glycosylation (arabinosylation) of the hydroxyproline Pro-68 enhances binding affinity of the CLE19p peptide for its receptor.</text>
</comment>
<comment type="similarity">
    <text evidence="14">Belongs to the CLV3/ESR signal peptide family.</text>
</comment>
<gene>
    <name evidence="13" type="primary">CLE19</name>
    <name evidence="12" type="synonym">ESR19</name>
    <name evidence="11" type="synonym">LLP1</name>
    <name evidence="15" type="ordered locus">At3g24225</name>
    <name evidence="16" type="ORF">MUJ8</name>
</gene>
<evidence type="ECO:0000250" key="1">
    <source>
        <dbReference type="UniProtKB" id="O49519"/>
    </source>
</evidence>
<evidence type="ECO:0000255" key="2"/>
<evidence type="ECO:0000255" key="3">
    <source>
        <dbReference type="PROSITE-ProRule" id="PRU00498"/>
    </source>
</evidence>
<evidence type="ECO:0000269" key="4">
    <source>
    </source>
</evidence>
<evidence type="ECO:0000269" key="5">
    <source>
    </source>
</evidence>
<evidence type="ECO:0000269" key="6">
    <source>
    </source>
</evidence>
<evidence type="ECO:0000269" key="7">
    <source>
    </source>
</evidence>
<evidence type="ECO:0000269" key="8">
    <source>
    </source>
</evidence>
<evidence type="ECO:0000269" key="9">
    <source>
    </source>
</evidence>
<evidence type="ECO:0000269" key="10">
    <source>
    </source>
</evidence>
<evidence type="ECO:0000303" key="11">
    <source>
    </source>
</evidence>
<evidence type="ECO:0000303" key="12">
    <source>
    </source>
</evidence>
<evidence type="ECO:0000303" key="13">
    <source>
    </source>
</evidence>
<evidence type="ECO:0000305" key="14"/>
<evidence type="ECO:0000312" key="15">
    <source>
        <dbReference type="Araport" id="AT3G24225"/>
    </source>
</evidence>
<evidence type="ECO:0000312" key="16">
    <source>
        <dbReference type="EMBL" id="AB028621"/>
    </source>
</evidence>
<accession>Q8W261</accession>
<name>CLE19_ARATH</name>
<dbReference type="EMBL" id="AF343657">
    <property type="protein sequence ID" value="AAL57177.1"/>
    <property type="molecule type" value="mRNA"/>
</dbReference>
<dbReference type="EMBL" id="AB028621">
    <property type="status" value="NOT_ANNOTATED_CDS"/>
    <property type="molecule type" value="Genomic_DNA"/>
</dbReference>
<dbReference type="EMBL" id="CP002686">
    <property type="protein sequence ID" value="AEE76876.1"/>
    <property type="molecule type" value="Genomic_DNA"/>
</dbReference>
<dbReference type="EMBL" id="BT026017">
    <property type="protein sequence ID" value="ABG25106.1"/>
    <property type="molecule type" value="mRNA"/>
</dbReference>
<dbReference type="RefSeq" id="NP_683589.1">
    <property type="nucleotide sequence ID" value="NM_148747.3"/>
</dbReference>
<dbReference type="STRING" id="3702.Q8W261"/>
<dbReference type="GlyCosmos" id="Q8W261">
    <property type="glycosylation" value="3 sites, No reported glycans"/>
</dbReference>
<dbReference type="GlyGen" id="Q8W261">
    <property type="glycosylation" value="2 sites"/>
</dbReference>
<dbReference type="PaxDb" id="3702-AT3G24225.1"/>
<dbReference type="EnsemblPlants" id="AT3G24225.1">
    <property type="protein sequence ID" value="AT3G24225.1"/>
    <property type="gene ID" value="AT3G24225"/>
</dbReference>
<dbReference type="GeneID" id="822009"/>
<dbReference type="Gramene" id="AT3G24225.1">
    <property type="protein sequence ID" value="AT3G24225.1"/>
    <property type="gene ID" value="AT3G24225"/>
</dbReference>
<dbReference type="KEGG" id="ath:AT3G24225"/>
<dbReference type="Araport" id="AT3G24225"/>
<dbReference type="TAIR" id="AT3G24225">
    <property type="gene designation" value="CLE19"/>
</dbReference>
<dbReference type="HOGENOM" id="CLU_2691150_0_0_1"/>
<dbReference type="InParanoid" id="Q8W261"/>
<dbReference type="OMA" id="MIMKGLM"/>
<dbReference type="OrthoDB" id="1095695at2759"/>
<dbReference type="PRO" id="PR:Q8W261"/>
<dbReference type="Proteomes" id="UP000006548">
    <property type="component" value="Chromosome 3"/>
</dbReference>
<dbReference type="ExpressionAtlas" id="Q8W261">
    <property type="expression patterns" value="baseline and differential"/>
</dbReference>
<dbReference type="GO" id="GO:0048046">
    <property type="term" value="C:apoplast"/>
    <property type="evidence" value="ECO:0000255"/>
    <property type="project" value="TAIR"/>
</dbReference>
<dbReference type="GO" id="GO:0033612">
    <property type="term" value="F:receptor serine/threonine kinase binding"/>
    <property type="evidence" value="ECO:0000353"/>
    <property type="project" value="UniProtKB"/>
</dbReference>
<dbReference type="GO" id="GO:0001708">
    <property type="term" value="P:cell fate specification"/>
    <property type="evidence" value="ECO:0000315"/>
    <property type="project" value="TAIR"/>
</dbReference>
<dbReference type="GO" id="GO:0045168">
    <property type="term" value="P:cell-cell signaling involved in cell fate commitment"/>
    <property type="evidence" value="ECO:0000250"/>
    <property type="project" value="UniProtKB"/>
</dbReference>
<dbReference type="GO" id="GO:0010082">
    <property type="term" value="P:regulation of root meristem growth"/>
    <property type="evidence" value="ECO:0000315"/>
    <property type="project" value="TAIR"/>
</dbReference>
<sequence length="74" mass="8149">MKIKGLMILASSLLILAFIHQSESASMRSLLMNNGSYEEEEQVLKYDSMGTIANSSALDSKRVIPTGPNPLHNR</sequence>
<protein>
    <recommendedName>
        <fullName evidence="13">CLAVATA3/ESR (CLE)-related protein 19</fullName>
        <shortName evidence="11">AtLLP1</shortName>
    </recommendedName>
    <alternativeName>
        <fullName evidence="12">Protein EMBRYO SURROUNDING REGION 19</fullName>
    </alternativeName>
    <component>
        <recommendedName>
            <fullName evidence="13">CLE19p</fullName>
        </recommendedName>
    </component>
</protein>
<feature type="signal peptide" evidence="2">
    <location>
        <begin position="1"/>
        <end position="24"/>
    </location>
</feature>
<feature type="chain" id="PRO_0000401267" description="CLAVATA3/ESR (CLE)-related protein 19">
    <location>
        <begin position="25"/>
        <end position="74"/>
    </location>
</feature>
<feature type="peptide" id="PRO_0000401268" description="CLE19p" evidence="1">
    <location>
        <begin position="62"/>
        <end position="73"/>
    </location>
</feature>
<feature type="modified residue" description="Hydroxyproline" evidence="1">
    <location>
        <position position="65"/>
    </location>
</feature>
<feature type="modified residue" description="Hydroxyproline" evidence="1">
    <location>
        <position position="68"/>
    </location>
</feature>
<feature type="glycosylation site" description="N-linked (GlcNAc...) asparagine" evidence="3">
    <location>
        <position position="34"/>
    </location>
</feature>
<feature type="glycosylation site" description="N-linked (GlcNAc...) asparagine" evidence="3">
    <location>
        <position position="54"/>
    </location>
</feature>
<feature type="glycosylation site" description="O-linked (Ara...) hydroxyproline" evidence="1">
    <location>
        <position position="68"/>
    </location>
</feature>
<proteinExistence type="evidence at transcript level"/>
<organism>
    <name type="scientific">Arabidopsis thaliana</name>
    <name type="common">Mouse-ear cress</name>
    <dbReference type="NCBI Taxonomy" id="3702"/>
    <lineage>
        <taxon>Eukaryota</taxon>
        <taxon>Viridiplantae</taxon>
        <taxon>Streptophyta</taxon>
        <taxon>Embryophyta</taxon>
        <taxon>Tracheophyta</taxon>
        <taxon>Spermatophyta</taxon>
        <taxon>Magnoliopsida</taxon>
        <taxon>eudicotyledons</taxon>
        <taxon>Gunneridae</taxon>
        <taxon>Pentapetalae</taxon>
        <taxon>rosids</taxon>
        <taxon>malvids</taxon>
        <taxon>Brassicales</taxon>
        <taxon>Brassicaceae</taxon>
        <taxon>Camelineae</taxon>
        <taxon>Arabidopsis</taxon>
    </lineage>
</organism>
<reference key="1">
    <citation type="journal article" date="2004" name="Gene">
        <title>Mis-expression of the CLV3/ESR-like gene CLE19 in Arabidopsis leads to a consumption of root meristem.</title>
        <authorList>
            <person name="Fiers M."/>
            <person name="Hause G."/>
            <person name="Boutilier K."/>
            <person name="Casamitjana-Martinez E."/>
            <person name="Weijers D."/>
            <person name="Offringa R."/>
            <person name="van der Geest L."/>
            <person name="van Lookeren Campagne M."/>
            <person name="Liu C.M."/>
        </authorList>
    </citation>
    <scope>NUCLEOTIDE SEQUENCE [MRNA]</scope>
    <scope>FUNCTION</scope>
    <scope>TISSUE SPECIFICITY</scope>
</reference>
<reference key="2">
    <citation type="journal article" date="2000" name="DNA Res.">
        <title>Structural analysis of Arabidopsis thaliana chromosome 3. I. Sequence features of the regions of 4,504,864 bp covered by sixty P1 and TAC clones.</title>
        <authorList>
            <person name="Sato S."/>
            <person name="Nakamura Y."/>
            <person name="Kaneko T."/>
            <person name="Katoh T."/>
            <person name="Asamizu E."/>
            <person name="Tabata S."/>
        </authorList>
    </citation>
    <scope>NUCLEOTIDE SEQUENCE [LARGE SCALE GENOMIC DNA]</scope>
    <source>
        <strain>cv. Columbia</strain>
    </source>
</reference>
<reference key="3">
    <citation type="journal article" date="2017" name="Plant J.">
        <title>Araport11: a complete reannotation of the Arabidopsis thaliana reference genome.</title>
        <authorList>
            <person name="Cheng C.Y."/>
            <person name="Krishnakumar V."/>
            <person name="Chan A.P."/>
            <person name="Thibaud-Nissen F."/>
            <person name="Schobel S."/>
            <person name="Town C.D."/>
        </authorList>
    </citation>
    <scope>GENOME REANNOTATION</scope>
    <source>
        <strain>cv. Columbia</strain>
    </source>
</reference>
<reference key="4">
    <citation type="submission" date="2006-06" db="EMBL/GenBank/DDBJ databases">
        <title>Arabidopsis ORF clones.</title>
        <authorList>
            <person name="Quinitio C."/>
            <person name="Chen H."/>
            <person name="Kim C.J."/>
            <person name="Shinn P."/>
            <person name="Ecker J.R."/>
        </authorList>
    </citation>
    <scope>NUCLEOTIDE SEQUENCE [LARGE SCALE MRNA]</scope>
    <source>
        <strain>cv. Columbia</strain>
    </source>
</reference>
<reference key="5">
    <citation type="journal article" date="2001" name="Plant Physiol.">
        <title>A large family of genes that share homology with CLAVATA3.</title>
        <authorList>
            <person name="Cock J.M."/>
            <person name="McCormick S."/>
        </authorList>
    </citation>
    <scope>GENE FAMILY</scope>
    <scope>NOMENCLATURE</scope>
</reference>
<reference key="6">
    <citation type="journal article" date="2003" name="Curr. Biol.">
        <title>Root-specific CLE19 overexpression and the sol1/2 suppressors implicate a CLV-like pathway in the control of Arabidopsis root meristem maintenance.</title>
        <authorList>
            <person name="Casamitjana-Martinez E."/>
            <person name="Hofhuis H.F."/>
            <person name="Xu J."/>
            <person name="Liu C.-M."/>
            <person name="Heidstra R."/>
            <person name="Scheres B."/>
        </authorList>
    </citation>
    <scope>FUNCTION</scope>
</reference>
<reference key="7">
    <citation type="journal article" date="2003" name="Plant Mol. Biol.">
        <title>The Arabidopsis CLV3-like (CLE) genes are expressed in diverse tissues and encode secreted proteins.</title>
        <authorList>
            <person name="Sharma V.K."/>
            <person name="Ramirez J."/>
            <person name="Fletcher J.C."/>
        </authorList>
    </citation>
    <scope>TISSUE SPECIFICITY</scope>
</reference>
<reference key="8">
    <citation type="journal article" date="2005" name="Plant Cell">
        <title>The 14-amino acid CLV3, CLE19, and CLE40 peptides trigger consumption of the root meristem in Arabidopsis through a CLAVATA2-dependent pathway.</title>
        <authorList>
            <person name="Fiers M."/>
            <person name="Golemiec E."/>
            <person name="Xu J."/>
            <person name="van der Geest L."/>
            <person name="Heidstra R."/>
            <person name="Stiekema W."/>
            <person name="Liu C.-M."/>
        </authorList>
    </citation>
    <scope>FUNCTION</scope>
    <scope>SUBCELLULAR LOCATION</scope>
</reference>
<reference key="9">
    <citation type="journal article" date="2006" name="Plant Physiol.">
        <title>Evidence for functional conservation, sufficiency, and proteolytic processing of the CLAVATA3 CLE domain.</title>
        <authorList>
            <person name="Ni J."/>
            <person name="Clark S.E."/>
        </authorList>
    </citation>
    <scope>FUNCTION</scope>
</reference>
<reference key="10">
    <citation type="journal article" date="2006" name="Plant Physiol.">
        <title>Gain-of-function phenotypes of many CLAVATA3/ESR genes, including four new family members, correlate with tandem variations in the conserved CLAVATA3/ESR domain.</title>
        <authorList>
            <person name="Strabala T.J."/>
            <person name="O'donnell P.J."/>
            <person name="Smit A.-M."/>
            <person name="Ampomah-Dwamena C."/>
            <person name="Martin E.J."/>
            <person name="Netzler N."/>
            <person name="Nieuwenhuizen N.J."/>
            <person name="Quinn B.D."/>
            <person name="Foote H.C.C."/>
            <person name="Hudson K.R."/>
        </authorList>
    </citation>
    <scope>FUNCTION</scope>
    <scope>GENE FAMILY</scope>
</reference>
<reference key="11">
    <citation type="journal article" date="2006" name="Science">
        <title>Dodeca-CLE peptides as suppressors of plant stem cell differentiation.</title>
        <authorList>
            <person name="Ito Y."/>
            <person name="Nakanomyo I."/>
            <person name="Motose H."/>
            <person name="Iwamoto K."/>
            <person name="Sawa S."/>
            <person name="Dohmae N."/>
            <person name="Fukuda H."/>
        </authorList>
    </citation>
    <scope>FUNCTION</scope>
</reference>
<reference key="12">
    <citation type="journal article" date="2008" name="Cell. Mol. Life Sci.">
        <title>The CLE family of plant polypeptide signaling molecules.</title>
        <authorList>
            <person name="Jun J.H."/>
            <person name="Fiume E."/>
            <person name="Fletcher J.C."/>
        </authorList>
    </citation>
    <scope>REVIEW</scope>
</reference>
<reference key="13">
    <citation type="journal article" date="2008" name="Curr. Opin. Plant Biol.">
        <title>Diverse and conserved roles of CLE peptides.</title>
        <authorList>
            <person name="Mitchum M.G."/>
            <person name="Wang X."/>
            <person name="Davis E.L."/>
        </authorList>
    </citation>
    <scope>REVIEW</scope>
</reference>
<reference key="14">
    <citation type="journal article" date="2010" name="Protoplasma">
        <title>CLE peptide signaling during plant development.</title>
        <authorList>
            <person name="Wang G."/>
            <person name="Fiers M."/>
        </authorList>
    </citation>
    <scope>REVIEW</scope>
</reference>
<keyword id="KW-0217">Developmental protein</keyword>
<keyword id="KW-0221">Differentiation</keyword>
<keyword id="KW-0325">Glycoprotein</keyword>
<keyword id="KW-0379">Hydroxylation</keyword>
<keyword id="KW-1185">Reference proteome</keyword>
<keyword id="KW-0964">Secreted</keyword>
<keyword id="KW-0732">Signal</keyword>